<organism>
    <name type="scientific">Escherichia coli O17:K52:H18 (strain UMN026 / ExPEC)</name>
    <dbReference type="NCBI Taxonomy" id="585056"/>
    <lineage>
        <taxon>Bacteria</taxon>
        <taxon>Pseudomonadati</taxon>
        <taxon>Pseudomonadota</taxon>
        <taxon>Gammaproteobacteria</taxon>
        <taxon>Enterobacterales</taxon>
        <taxon>Enterobacteriaceae</taxon>
        <taxon>Escherichia</taxon>
    </lineage>
</organism>
<accession>B7N980</accession>
<reference key="1">
    <citation type="journal article" date="2009" name="PLoS Genet.">
        <title>Organised genome dynamics in the Escherichia coli species results in highly diverse adaptive paths.</title>
        <authorList>
            <person name="Touchon M."/>
            <person name="Hoede C."/>
            <person name="Tenaillon O."/>
            <person name="Barbe V."/>
            <person name="Baeriswyl S."/>
            <person name="Bidet P."/>
            <person name="Bingen E."/>
            <person name="Bonacorsi S."/>
            <person name="Bouchier C."/>
            <person name="Bouvet O."/>
            <person name="Calteau A."/>
            <person name="Chiapello H."/>
            <person name="Clermont O."/>
            <person name="Cruveiller S."/>
            <person name="Danchin A."/>
            <person name="Diard M."/>
            <person name="Dossat C."/>
            <person name="Karoui M.E."/>
            <person name="Frapy E."/>
            <person name="Garry L."/>
            <person name="Ghigo J.M."/>
            <person name="Gilles A.M."/>
            <person name="Johnson J."/>
            <person name="Le Bouguenec C."/>
            <person name="Lescat M."/>
            <person name="Mangenot S."/>
            <person name="Martinez-Jehanne V."/>
            <person name="Matic I."/>
            <person name="Nassif X."/>
            <person name="Oztas S."/>
            <person name="Petit M.A."/>
            <person name="Pichon C."/>
            <person name="Rouy Z."/>
            <person name="Ruf C.S."/>
            <person name="Schneider D."/>
            <person name="Tourret J."/>
            <person name="Vacherie B."/>
            <person name="Vallenet D."/>
            <person name="Medigue C."/>
            <person name="Rocha E.P.C."/>
            <person name="Denamur E."/>
        </authorList>
    </citation>
    <scope>NUCLEOTIDE SEQUENCE [LARGE SCALE GENOMIC DNA]</scope>
    <source>
        <strain>UMN026 / ExPEC</strain>
    </source>
</reference>
<gene>
    <name evidence="1" type="primary">cysS</name>
    <name type="ordered locus">ECUMN_0566</name>
</gene>
<feature type="chain" id="PRO_1000199065" description="Cysteine--tRNA ligase">
    <location>
        <begin position="1"/>
        <end position="461"/>
    </location>
</feature>
<feature type="short sequence motif" description="'HIGH' region">
    <location>
        <begin position="30"/>
        <end position="40"/>
    </location>
</feature>
<feature type="short sequence motif" description="'KMSKS' region">
    <location>
        <begin position="266"/>
        <end position="270"/>
    </location>
</feature>
<feature type="binding site" evidence="1">
    <location>
        <position position="28"/>
    </location>
    <ligand>
        <name>Zn(2+)</name>
        <dbReference type="ChEBI" id="CHEBI:29105"/>
    </ligand>
</feature>
<feature type="binding site" evidence="1">
    <location>
        <position position="209"/>
    </location>
    <ligand>
        <name>Zn(2+)</name>
        <dbReference type="ChEBI" id="CHEBI:29105"/>
    </ligand>
</feature>
<feature type="binding site" evidence="1">
    <location>
        <position position="234"/>
    </location>
    <ligand>
        <name>Zn(2+)</name>
        <dbReference type="ChEBI" id="CHEBI:29105"/>
    </ligand>
</feature>
<feature type="binding site" evidence="1">
    <location>
        <position position="238"/>
    </location>
    <ligand>
        <name>Zn(2+)</name>
        <dbReference type="ChEBI" id="CHEBI:29105"/>
    </ligand>
</feature>
<feature type="binding site" evidence="1">
    <location>
        <position position="269"/>
    </location>
    <ligand>
        <name>ATP</name>
        <dbReference type="ChEBI" id="CHEBI:30616"/>
    </ligand>
</feature>
<proteinExistence type="inferred from homology"/>
<keyword id="KW-0030">Aminoacyl-tRNA synthetase</keyword>
<keyword id="KW-0067">ATP-binding</keyword>
<keyword id="KW-0963">Cytoplasm</keyword>
<keyword id="KW-0436">Ligase</keyword>
<keyword id="KW-0479">Metal-binding</keyword>
<keyword id="KW-0547">Nucleotide-binding</keyword>
<keyword id="KW-0648">Protein biosynthesis</keyword>
<keyword id="KW-0862">Zinc</keyword>
<dbReference type="EC" id="6.1.1.16" evidence="1"/>
<dbReference type="EMBL" id="CU928163">
    <property type="protein sequence ID" value="CAR11781.1"/>
    <property type="molecule type" value="Genomic_DNA"/>
</dbReference>
<dbReference type="RefSeq" id="WP_000912355.1">
    <property type="nucleotide sequence ID" value="NC_011751.1"/>
</dbReference>
<dbReference type="RefSeq" id="YP_002411329.1">
    <property type="nucleotide sequence ID" value="NC_011751.1"/>
</dbReference>
<dbReference type="SMR" id="B7N980"/>
<dbReference type="STRING" id="585056.ECUMN_0566"/>
<dbReference type="KEGG" id="eum:ECUMN_0566"/>
<dbReference type="PATRIC" id="fig|585056.7.peg.775"/>
<dbReference type="HOGENOM" id="CLU_013528_0_1_6"/>
<dbReference type="Proteomes" id="UP000007097">
    <property type="component" value="Chromosome"/>
</dbReference>
<dbReference type="GO" id="GO:0005829">
    <property type="term" value="C:cytosol"/>
    <property type="evidence" value="ECO:0007669"/>
    <property type="project" value="TreeGrafter"/>
</dbReference>
<dbReference type="GO" id="GO:0005524">
    <property type="term" value="F:ATP binding"/>
    <property type="evidence" value="ECO:0007669"/>
    <property type="project" value="UniProtKB-UniRule"/>
</dbReference>
<dbReference type="GO" id="GO:0004817">
    <property type="term" value="F:cysteine-tRNA ligase activity"/>
    <property type="evidence" value="ECO:0007669"/>
    <property type="project" value="UniProtKB-UniRule"/>
</dbReference>
<dbReference type="GO" id="GO:0008270">
    <property type="term" value="F:zinc ion binding"/>
    <property type="evidence" value="ECO:0007669"/>
    <property type="project" value="UniProtKB-UniRule"/>
</dbReference>
<dbReference type="GO" id="GO:0006423">
    <property type="term" value="P:cysteinyl-tRNA aminoacylation"/>
    <property type="evidence" value="ECO:0007669"/>
    <property type="project" value="UniProtKB-UniRule"/>
</dbReference>
<dbReference type="CDD" id="cd07963">
    <property type="entry name" value="Anticodon_Ia_Cys"/>
    <property type="match status" value="1"/>
</dbReference>
<dbReference type="CDD" id="cd00672">
    <property type="entry name" value="CysRS_core"/>
    <property type="match status" value="1"/>
</dbReference>
<dbReference type="FunFam" id="1.20.120.1910:FF:000001">
    <property type="entry name" value="Cysteine--tRNA ligase"/>
    <property type="match status" value="1"/>
</dbReference>
<dbReference type="FunFam" id="3.40.50.620:FF:000009">
    <property type="entry name" value="Cysteine--tRNA ligase"/>
    <property type="match status" value="1"/>
</dbReference>
<dbReference type="Gene3D" id="1.20.120.1910">
    <property type="entry name" value="Cysteine-tRNA ligase, C-terminal anti-codon recognition domain"/>
    <property type="match status" value="1"/>
</dbReference>
<dbReference type="Gene3D" id="3.40.50.620">
    <property type="entry name" value="HUPs"/>
    <property type="match status" value="1"/>
</dbReference>
<dbReference type="HAMAP" id="MF_00041">
    <property type="entry name" value="Cys_tRNA_synth"/>
    <property type="match status" value="1"/>
</dbReference>
<dbReference type="InterPro" id="IPR015803">
    <property type="entry name" value="Cys-tRNA-ligase"/>
</dbReference>
<dbReference type="InterPro" id="IPR015273">
    <property type="entry name" value="Cys-tRNA-synt_Ia_DALR"/>
</dbReference>
<dbReference type="InterPro" id="IPR024909">
    <property type="entry name" value="Cys-tRNA/MSH_ligase"/>
</dbReference>
<dbReference type="InterPro" id="IPR056411">
    <property type="entry name" value="CysS_C"/>
</dbReference>
<dbReference type="InterPro" id="IPR014729">
    <property type="entry name" value="Rossmann-like_a/b/a_fold"/>
</dbReference>
<dbReference type="InterPro" id="IPR032678">
    <property type="entry name" value="tRNA-synt_1_cat_dom"/>
</dbReference>
<dbReference type="InterPro" id="IPR009080">
    <property type="entry name" value="tRNAsynth_Ia_anticodon-bd"/>
</dbReference>
<dbReference type="NCBIfam" id="TIGR00435">
    <property type="entry name" value="cysS"/>
    <property type="match status" value="1"/>
</dbReference>
<dbReference type="PANTHER" id="PTHR10890:SF3">
    <property type="entry name" value="CYSTEINE--TRNA LIGASE, CYTOPLASMIC"/>
    <property type="match status" value="1"/>
</dbReference>
<dbReference type="PANTHER" id="PTHR10890">
    <property type="entry name" value="CYSTEINYL-TRNA SYNTHETASE"/>
    <property type="match status" value="1"/>
</dbReference>
<dbReference type="Pfam" id="PF23493">
    <property type="entry name" value="CysS_C"/>
    <property type="match status" value="1"/>
</dbReference>
<dbReference type="Pfam" id="PF09190">
    <property type="entry name" value="DALR_2"/>
    <property type="match status" value="1"/>
</dbReference>
<dbReference type="Pfam" id="PF01406">
    <property type="entry name" value="tRNA-synt_1e"/>
    <property type="match status" value="1"/>
</dbReference>
<dbReference type="PRINTS" id="PR00983">
    <property type="entry name" value="TRNASYNTHCYS"/>
</dbReference>
<dbReference type="SMART" id="SM00840">
    <property type="entry name" value="DALR_2"/>
    <property type="match status" value="1"/>
</dbReference>
<dbReference type="SUPFAM" id="SSF47323">
    <property type="entry name" value="Anticodon-binding domain of a subclass of class I aminoacyl-tRNA synthetases"/>
    <property type="match status" value="1"/>
</dbReference>
<dbReference type="SUPFAM" id="SSF52374">
    <property type="entry name" value="Nucleotidylyl transferase"/>
    <property type="match status" value="1"/>
</dbReference>
<name>SYC_ECOLU</name>
<protein>
    <recommendedName>
        <fullName evidence="1">Cysteine--tRNA ligase</fullName>
        <ecNumber evidence="1">6.1.1.16</ecNumber>
    </recommendedName>
    <alternativeName>
        <fullName evidence="1">Cysteinyl-tRNA synthetase</fullName>
        <shortName evidence="1">CysRS</shortName>
    </alternativeName>
</protein>
<comment type="catalytic activity">
    <reaction evidence="1">
        <text>tRNA(Cys) + L-cysteine + ATP = L-cysteinyl-tRNA(Cys) + AMP + diphosphate</text>
        <dbReference type="Rhea" id="RHEA:17773"/>
        <dbReference type="Rhea" id="RHEA-COMP:9661"/>
        <dbReference type="Rhea" id="RHEA-COMP:9679"/>
        <dbReference type="ChEBI" id="CHEBI:30616"/>
        <dbReference type="ChEBI" id="CHEBI:33019"/>
        <dbReference type="ChEBI" id="CHEBI:35235"/>
        <dbReference type="ChEBI" id="CHEBI:78442"/>
        <dbReference type="ChEBI" id="CHEBI:78517"/>
        <dbReference type="ChEBI" id="CHEBI:456215"/>
        <dbReference type="EC" id="6.1.1.16"/>
    </reaction>
</comment>
<comment type="cofactor">
    <cofactor evidence="1">
        <name>Zn(2+)</name>
        <dbReference type="ChEBI" id="CHEBI:29105"/>
    </cofactor>
    <text evidence="1">Binds 1 zinc ion per subunit.</text>
</comment>
<comment type="subunit">
    <text evidence="1">Monomer.</text>
</comment>
<comment type="subcellular location">
    <subcellularLocation>
        <location evidence="1">Cytoplasm</location>
    </subcellularLocation>
</comment>
<comment type="similarity">
    <text evidence="1">Belongs to the class-I aminoacyl-tRNA synthetase family.</text>
</comment>
<sequence length="461" mass="52226">MLKIFNTLTRQKEEFKPIHAGEVGMYVCGITVYDLCHIGHGRTFVAFDVVARYLRFLGYKLKYVRNITDIDDKIIKRANENGESFVALVDRMIAEMHKDFDALNILRPDMEPRATHHIAEIIELTEQLIAKGHAYVADNGDVMFDVPTDPTYGVLSRQDLDQLQAGARVDVVDDKRNPMDFVLWKMSKEGEPSWPSPWGPGRPGWHIECSAMNCKQLGNHFDIHGGGSDLMFPHHENEIAQSTCAHDGQYVNYWMHSGMVMVDREKMSKSLGNFFTVRDVLKYYDAETVRYFLMSGHYRSQLNYSEENLKQARAALERLYTALRGTDKTVAPAGGEAFEARFIEAMDDDFNTPEAYSVLFDMAREVNRLKAEDMAAANAMASHLRKLSSVLGLLEQEPEAFLQSGAQADDSEVAEIEALIQQRLDARKAKDWAAADAARDRLNEMGIVLEDGPQGTTWRRK</sequence>
<evidence type="ECO:0000255" key="1">
    <source>
        <dbReference type="HAMAP-Rule" id="MF_00041"/>
    </source>
</evidence>